<dbReference type="EC" id="2.7.7.6" evidence="1"/>
<dbReference type="EMBL" id="CP000474">
    <property type="protein sequence ID" value="ABM07371.1"/>
    <property type="molecule type" value="Genomic_DNA"/>
</dbReference>
<dbReference type="RefSeq" id="WP_011775567.1">
    <property type="nucleotide sequence ID" value="NC_008711.1"/>
</dbReference>
<dbReference type="SMR" id="A1R8R5"/>
<dbReference type="STRING" id="290340.AAur_2918"/>
<dbReference type="KEGG" id="aau:AAur_2918"/>
<dbReference type="eggNOG" id="COG0202">
    <property type="taxonomic scope" value="Bacteria"/>
</dbReference>
<dbReference type="HOGENOM" id="CLU_053084_0_1_11"/>
<dbReference type="OrthoDB" id="9805706at2"/>
<dbReference type="Proteomes" id="UP000000637">
    <property type="component" value="Chromosome"/>
</dbReference>
<dbReference type="GO" id="GO:0005737">
    <property type="term" value="C:cytoplasm"/>
    <property type="evidence" value="ECO:0007669"/>
    <property type="project" value="UniProtKB-ARBA"/>
</dbReference>
<dbReference type="GO" id="GO:0000428">
    <property type="term" value="C:DNA-directed RNA polymerase complex"/>
    <property type="evidence" value="ECO:0007669"/>
    <property type="project" value="UniProtKB-KW"/>
</dbReference>
<dbReference type="GO" id="GO:0003677">
    <property type="term" value="F:DNA binding"/>
    <property type="evidence" value="ECO:0007669"/>
    <property type="project" value="UniProtKB-UniRule"/>
</dbReference>
<dbReference type="GO" id="GO:0003899">
    <property type="term" value="F:DNA-directed RNA polymerase activity"/>
    <property type="evidence" value="ECO:0007669"/>
    <property type="project" value="UniProtKB-UniRule"/>
</dbReference>
<dbReference type="GO" id="GO:0046983">
    <property type="term" value="F:protein dimerization activity"/>
    <property type="evidence" value="ECO:0007669"/>
    <property type="project" value="InterPro"/>
</dbReference>
<dbReference type="GO" id="GO:0006351">
    <property type="term" value="P:DNA-templated transcription"/>
    <property type="evidence" value="ECO:0007669"/>
    <property type="project" value="UniProtKB-UniRule"/>
</dbReference>
<dbReference type="CDD" id="cd06928">
    <property type="entry name" value="RNAP_alpha_NTD"/>
    <property type="match status" value="1"/>
</dbReference>
<dbReference type="FunFam" id="1.10.150.20:FF:000001">
    <property type="entry name" value="DNA-directed RNA polymerase subunit alpha"/>
    <property type="match status" value="1"/>
</dbReference>
<dbReference type="FunFam" id="2.170.120.12:FF:000001">
    <property type="entry name" value="DNA-directed RNA polymerase subunit alpha"/>
    <property type="match status" value="1"/>
</dbReference>
<dbReference type="Gene3D" id="1.10.150.20">
    <property type="entry name" value="5' to 3' exonuclease, C-terminal subdomain"/>
    <property type="match status" value="1"/>
</dbReference>
<dbReference type="Gene3D" id="2.170.120.12">
    <property type="entry name" value="DNA-directed RNA polymerase, insert domain"/>
    <property type="match status" value="1"/>
</dbReference>
<dbReference type="Gene3D" id="3.30.1360.10">
    <property type="entry name" value="RNA polymerase, RBP11-like subunit"/>
    <property type="match status" value="1"/>
</dbReference>
<dbReference type="HAMAP" id="MF_00059">
    <property type="entry name" value="RNApol_bact_RpoA"/>
    <property type="match status" value="1"/>
</dbReference>
<dbReference type="InterPro" id="IPR011262">
    <property type="entry name" value="DNA-dir_RNA_pol_insert"/>
</dbReference>
<dbReference type="InterPro" id="IPR011263">
    <property type="entry name" value="DNA-dir_RNA_pol_RpoA/D/Rpb3"/>
</dbReference>
<dbReference type="InterPro" id="IPR011773">
    <property type="entry name" value="DNA-dir_RpoA"/>
</dbReference>
<dbReference type="InterPro" id="IPR036603">
    <property type="entry name" value="RBP11-like"/>
</dbReference>
<dbReference type="InterPro" id="IPR011260">
    <property type="entry name" value="RNAP_asu_C"/>
</dbReference>
<dbReference type="InterPro" id="IPR036643">
    <property type="entry name" value="RNApol_insert_sf"/>
</dbReference>
<dbReference type="NCBIfam" id="NF003513">
    <property type="entry name" value="PRK05182.1-2"/>
    <property type="match status" value="1"/>
</dbReference>
<dbReference type="NCBIfam" id="NF003514">
    <property type="entry name" value="PRK05182.1-4"/>
    <property type="match status" value="1"/>
</dbReference>
<dbReference type="NCBIfam" id="NF003519">
    <property type="entry name" value="PRK05182.2-5"/>
    <property type="match status" value="1"/>
</dbReference>
<dbReference type="NCBIfam" id="TIGR02027">
    <property type="entry name" value="rpoA"/>
    <property type="match status" value="1"/>
</dbReference>
<dbReference type="Pfam" id="PF01000">
    <property type="entry name" value="RNA_pol_A_bac"/>
    <property type="match status" value="1"/>
</dbReference>
<dbReference type="Pfam" id="PF03118">
    <property type="entry name" value="RNA_pol_A_CTD"/>
    <property type="match status" value="1"/>
</dbReference>
<dbReference type="Pfam" id="PF01193">
    <property type="entry name" value="RNA_pol_L"/>
    <property type="match status" value="1"/>
</dbReference>
<dbReference type="SMART" id="SM00662">
    <property type="entry name" value="RPOLD"/>
    <property type="match status" value="1"/>
</dbReference>
<dbReference type="SUPFAM" id="SSF47789">
    <property type="entry name" value="C-terminal domain of RNA polymerase alpha subunit"/>
    <property type="match status" value="1"/>
</dbReference>
<dbReference type="SUPFAM" id="SSF56553">
    <property type="entry name" value="Insert subdomain of RNA polymerase alpha subunit"/>
    <property type="match status" value="1"/>
</dbReference>
<dbReference type="SUPFAM" id="SSF55257">
    <property type="entry name" value="RBP11-like subunits of RNA polymerase"/>
    <property type="match status" value="1"/>
</dbReference>
<comment type="function">
    <text evidence="1">DNA-dependent RNA polymerase catalyzes the transcription of DNA into RNA using the four ribonucleoside triphosphates as substrates.</text>
</comment>
<comment type="catalytic activity">
    <reaction evidence="1">
        <text>RNA(n) + a ribonucleoside 5'-triphosphate = RNA(n+1) + diphosphate</text>
        <dbReference type="Rhea" id="RHEA:21248"/>
        <dbReference type="Rhea" id="RHEA-COMP:14527"/>
        <dbReference type="Rhea" id="RHEA-COMP:17342"/>
        <dbReference type="ChEBI" id="CHEBI:33019"/>
        <dbReference type="ChEBI" id="CHEBI:61557"/>
        <dbReference type="ChEBI" id="CHEBI:140395"/>
        <dbReference type="EC" id="2.7.7.6"/>
    </reaction>
</comment>
<comment type="subunit">
    <text evidence="1">Homodimer. The RNAP catalytic core consists of 2 alpha, 1 beta, 1 beta' and 1 omega subunit. When a sigma factor is associated with the core the holoenzyme is formed, which can initiate transcription.</text>
</comment>
<comment type="domain">
    <text evidence="1">The N-terminal domain is essential for RNAP assembly and basal transcription, whereas the C-terminal domain is involved in interaction with transcriptional regulators and with upstream promoter elements.</text>
</comment>
<comment type="similarity">
    <text evidence="1">Belongs to the RNA polymerase alpha chain family.</text>
</comment>
<organism>
    <name type="scientific">Paenarthrobacter aurescens (strain TC1)</name>
    <dbReference type="NCBI Taxonomy" id="290340"/>
    <lineage>
        <taxon>Bacteria</taxon>
        <taxon>Bacillati</taxon>
        <taxon>Actinomycetota</taxon>
        <taxon>Actinomycetes</taxon>
        <taxon>Micrococcales</taxon>
        <taxon>Micrococcaceae</taxon>
        <taxon>Paenarthrobacter</taxon>
    </lineage>
</organism>
<protein>
    <recommendedName>
        <fullName evidence="1">DNA-directed RNA polymerase subunit alpha</fullName>
        <shortName evidence="1">RNAP subunit alpha</shortName>
        <ecNumber evidence="1">2.7.7.6</ecNumber>
    </recommendedName>
    <alternativeName>
        <fullName evidence="1">RNA polymerase subunit alpha</fullName>
    </alternativeName>
    <alternativeName>
        <fullName evidence="1">Transcriptase subunit alpha</fullName>
    </alternativeName>
</protein>
<accession>A1R8R5</accession>
<reference key="1">
    <citation type="journal article" date="2006" name="PLoS Genet.">
        <title>Secrets of soil survival revealed by the genome sequence of Arthrobacter aurescens TC1.</title>
        <authorList>
            <person name="Mongodin E.F."/>
            <person name="Shapir N."/>
            <person name="Daugherty S.C."/>
            <person name="DeBoy R.T."/>
            <person name="Emerson J.B."/>
            <person name="Shvartzbeyn A."/>
            <person name="Radune D."/>
            <person name="Vamathevan J."/>
            <person name="Riggs F."/>
            <person name="Grinberg V."/>
            <person name="Khouri H.M."/>
            <person name="Wackett L.P."/>
            <person name="Nelson K.E."/>
            <person name="Sadowsky M.J."/>
        </authorList>
    </citation>
    <scope>NUCLEOTIDE SEQUENCE [LARGE SCALE GENOMIC DNA]</scope>
    <source>
        <strain>TC1</strain>
    </source>
</reference>
<feature type="chain" id="PRO_0000296779" description="DNA-directed RNA polymerase subunit alpha">
    <location>
        <begin position="1"/>
        <end position="336"/>
    </location>
</feature>
<feature type="region of interest" description="Alpha N-terminal domain (alpha-NTD)" evidence="1">
    <location>
        <begin position="1"/>
        <end position="226"/>
    </location>
</feature>
<feature type="region of interest" description="Alpha C-terminal domain (alpha-CTD)" evidence="1">
    <location>
        <begin position="241"/>
        <end position="336"/>
    </location>
</feature>
<keyword id="KW-0240">DNA-directed RNA polymerase</keyword>
<keyword id="KW-0548">Nucleotidyltransferase</keyword>
<keyword id="KW-0804">Transcription</keyword>
<keyword id="KW-0808">Transferase</keyword>
<name>RPOA_PAEAT</name>
<evidence type="ECO:0000255" key="1">
    <source>
        <dbReference type="HAMAP-Rule" id="MF_00059"/>
    </source>
</evidence>
<sequence>MLIAQRPTLSEEVVSENRSRFIIEPLEPGFGYTLGNSLRRTLLSSIPGAAVTSIRIDGVLHEFTTVPGVKEDVTEIILNIKNLSVSSEHDEPVVAYLRKQGPGVVTAADIAPPAGVEFHNPDLHIATLNSKGKFELELTIERGRGYVSAAQNKSGDSEIGRIPVDSIYSPVMKVTFRVEATRVEQRTDFDKLIVDVETKQAIAPRDAVASAGTTLVELFGLARELNTAAEGIEIGPSPTDAALAADMALPIEDLDLTVRSYNCLKREGIHTVGELVARSEADLMDIRNFGAKSIDEVKAKLVELGLSLKDSPPGFDLAARAAAIEEDDAAFSDDEL</sequence>
<proteinExistence type="inferred from homology"/>
<gene>
    <name evidence="1" type="primary">rpoA</name>
    <name type="ordered locus">AAur_2918</name>
</gene>